<evidence type="ECO:0000255" key="1">
    <source>
        <dbReference type="HAMAP-Rule" id="MF_00682"/>
    </source>
</evidence>
<comment type="function">
    <text evidence="1">Co-chaperone involved in the maturation of iron-sulfur cluster-containing proteins. Seems to help targeting proteins to be folded toward HscA.</text>
</comment>
<comment type="subunit">
    <text evidence="1">Interacts with HscA and stimulates its ATPase activity.</text>
</comment>
<comment type="similarity">
    <text evidence="1">Belongs to the HscB family.</text>
</comment>
<name>HSCB_ACIBS</name>
<feature type="chain" id="PRO_1000131721" description="Co-chaperone protein HscB homolog">
    <location>
        <begin position="1"/>
        <end position="172"/>
    </location>
</feature>
<feature type="domain" description="J" evidence="1">
    <location>
        <begin position="2"/>
        <end position="69"/>
    </location>
</feature>
<protein>
    <recommendedName>
        <fullName evidence="1">Co-chaperone protein HscB homolog</fullName>
    </recommendedName>
</protein>
<organism>
    <name type="scientific">Acinetobacter baumannii (strain SDF)</name>
    <dbReference type="NCBI Taxonomy" id="509170"/>
    <lineage>
        <taxon>Bacteria</taxon>
        <taxon>Pseudomonadati</taxon>
        <taxon>Pseudomonadota</taxon>
        <taxon>Gammaproteobacteria</taxon>
        <taxon>Moraxellales</taxon>
        <taxon>Moraxellaceae</taxon>
        <taxon>Acinetobacter</taxon>
        <taxon>Acinetobacter calcoaceticus/baumannii complex</taxon>
    </lineage>
</organism>
<reference key="1">
    <citation type="journal article" date="2008" name="PLoS ONE">
        <title>Comparative analysis of Acinetobacters: three genomes for three lifestyles.</title>
        <authorList>
            <person name="Vallenet D."/>
            <person name="Nordmann P."/>
            <person name="Barbe V."/>
            <person name="Poirel L."/>
            <person name="Mangenot S."/>
            <person name="Bataille E."/>
            <person name="Dossat C."/>
            <person name="Gas S."/>
            <person name="Kreimeyer A."/>
            <person name="Lenoble P."/>
            <person name="Oztas S."/>
            <person name="Poulain J."/>
            <person name="Segurens B."/>
            <person name="Robert C."/>
            <person name="Abergel C."/>
            <person name="Claverie J.-M."/>
            <person name="Raoult D."/>
            <person name="Medigue C."/>
            <person name="Weissenbach J."/>
            <person name="Cruveiller S."/>
        </authorList>
    </citation>
    <scope>NUCLEOTIDE SEQUENCE [LARGE SCALE GENOMIC DNA]</scope>
    <source>
        <strain>SDF</strain>
    </source>
</reference>
<proteinExistence type="inferred from homology"/>
<dbReference type="EMBL" id="CU468230">
    <property type="protein sequence ID" value="CAP01187.1"/>
    <property type="molecule type" value="Genomic_DNA"/>
</dbReference>
<dbReference type="SMR" id="B0VNV9"/>
<dbReference type="KEGG" id="abm:ABSDF1850"/>
<dbReference type="HOGENOM" id="CLU_068529_2_0_6"/>
<dbReference type="Proteomes" id="UP000001741">
    <property type="component" value="Chromosome"/>
</dbReference>
<dbReference type="GO" id="GO:0001671">
    <property type="term" value="F:ATPase activator activity"/>
    <property type="evidence" value="ECO:0007669"/>
    <property type="project" value="InterPro"/>
</dbReference>
<dbReference type="GO" id="GO:0051087">
    <property type="term" value="F:protein-folding chaperone binding"/>
    <property type="evidence" value="ECO:0007669"/>
    <property type="project" value="InterPro"/>
</dbReference>
<dbReference type="GO" id="GO:0044571">
    <property type="term" value="P:[2Fe-2S] cluster assembly"/>
    <property type="evidence" value="ECO:0007669"/>
    <property type="project" value="InterPro"/>
</dbReference>
<dbReference type="GO" id="GO:0051259">
    <property type="term" value="P:protein complex oligomerization"/>
    <property type="evidence" value="ECO:0007669"/>
    <property type="project" value="InterPro"/>
</dbReference>
<dbReference type="GO" id="GO:0006457">
    <property type="term" value="P:protein folding"/>
    <property type="evidence" value="ECO:0007669"/>
    <property type="project" value="UniProtKB-UniRule"/>
</dbReference>
<dbReference type="CDD" id="cd06257">
    <property type="entry name" value="DnaJ"/>
    <property type="match status" value="1"/>
</dbReference>
<dbReference type="Gene3D" id="1.10.287.110">
    <property type="entry name" value="DnaJ domain"/>
    <property type="match status" value="1"/>
</dbReference>
<dbReference type="Gene3D" id="1.20.1280.20">
    <property type="entry name" value="HscB, C-terminal domain"/>
    <property type="match status" value="1"/>
</dbReference>
<dbReference type="HAMAP" id="MF_00682">
    <property type="entry name" value="HscB"/>
    <property type="match status" value="1"/>
</dbReference>
<dbReference type="InterPro" id="IPR001623">
    <property type="entry name" value="DnaJ_domain"/>
</dbReference>
<dbReference type="InterPro" id="IPR004640">
    <property type="entry name" value="HscB"/>
</dbReference>
<dbReference type="InterPro" id="IPR036386">
    <property type="entry name" value="HscB_C_sf"/>
</dbReference>
<dbReference type="InterPro" id="IPR009073">
    <property type="entry name" value="HscB_oligo_C"/>
</dbReference>
<dbReference type="InterPro" id="IPR036869">
    <property type="entry name" value="J_dom_sf"/>
</dbReference>
<dbReference type="NCBIfam" id="TIGR00714">
    <property type="entry name" value="hscB"/>
    <property type="match status" value="1"/>
</dbReference>
<dbReference type="PANTHER" id="PTHR14021">
    <property type="entry name" value="IRON-SULFUR CLUSTER CO-CHAPERONE PROTEIN HSCB"/>
    <property type="match status" value="1"/>
</dbReference>
<dbReference type="PANTHER" id="PTHR14021:SF15">
    <property type="entry name" value="IRON-SULFUR CLUSTER CO-CHAPERONE PROTEIN HSCB"/>
    <property type="match status" value="1"/>
</dbReference>
<dbReference type="Pfam" id="PF00226">
    <property type="entry name" value="DnaJ"/>
    <property type="match status" value="1"/>
</dbReference>
<dbReference type="Pfam" id="PF07743">
    <property type="entry name" value="HSCB_C"/>
    <property type="match status" value="1"/>
</dbReference>
<dbReference type="SMART" id="SM00271">
    <property type="entry name" value="DnaJ"/>
    <property type="match status" value="1"/>
</dbReference>
<dbReference type="SUPFAM" id="SSF46565">
    <property type="entry name" value="Chaperone J-domain"/>
    <property type="match status" value="1"/>
</dbReference>
<dbReference type="SUPFAM" id="SSF47144">
    <property type="entry name" value="HSC20 (HSCB), C-terminal oligomerisation domain"/>
    <property type="match status" value="1"/>
</dbReference>
<dbReference type="PROSITE" id="PS50076">
    <property type="entry name" value="DNAJ_2"/>
    <property type="match status" value="1"/>
</dbReference>
<keyword id="KW-0143">Chaperone</keyword>
<accession>B0VNV9</accession>
<sequence length="172" mass="20152">MNHFELFNLPVALDIDLASLKSNFLSLQQQYHPDKAADKDQALIKSSEINQAFKTLSQVDSRAAYLLALKKQDHHLDQSISDFEFLQSALELREQLDEATSSEHLRTLRLEVQQWIDGLVREFKIDYSEEDWSEARDTVRKLRFFQRVLNDIDKAEDQLLDDEDSFDLDDDF</sequence>
<gene>
    <name evidence="1" type="primary">hscB</name>
    <name type="ordered locus">ABSDF1850</name>
</gene>